<proteinExistence type="inferred from homology"/>
<keyword id="KW-1035">Host cytoplasm</keyword>
<keyword id="KW-1037">Host cytoskeleton</keyword>
<keyword id="KW-0945">Host-virus interaction</keyword>
<keyword id="KW-1090">Inhibition of host innate immune response by virus</keyword>
<keyword id="KW-1092">Inhibition of host IRF3 by virus</keyword>
<keyword id="KW-1093">Inhibition of host IRF7 by virus</keyword>
<keyword id="KW-1100">Inhibition of host NF-kappa-B by virus</keyword>
<keyword id="KW-1113">Inhibition of host RLR pathway by virus</keyword>
<keyword id="KW-0922">Interferon antiviral system evasion</keyword>
<keyword id="KW-0479">Metal-binding</keyword>
<keyword id="KW-0597">Phosphoprotein</keyword>
<keyword id="KW-0694">RNA-binding</keyword>
<keyword id="KW-0899">Viral immunoevasion</keyword>
<protein>
    <recommendedName>
        <fullName evidence="1">Non-structural protein 1</fullName>
        <shortName evidence="1">NSP1</shortName>
    </recommendedName>
    <alternativeName>
        <fullName evidence="1">NCVP2</fullName>
    </alternativeName>
    <alternativeName>
        <fullName evidence="1">Non-structural RNA-binding protein 53</fullName>
        <shortName evidence="1">NS53</shortName>
    </alternativeName>
</protein>
<accession>O41178</accession>
<organism>
    <name type="scientific">Rotavirus A (strain RVA/Pig/Mexico/YM/1983/G11P9[7])</name>
    <name type="common">RV-A</name>
    <dbReference type="NCBI Taxonomy" id="10919"/>
    <lineage>
        <taxon>Viruses</taxon>
        <taxon>Riboviria</taxon>
        <taxon>Orthornavirae</taxon>
        <taxon>Duplornaviricota</taxon>
        <taxon>Resentoviricetes</taxon>
        <taxon>Reovirales</taxon>
        <taxon>Sedoreoviridae</taxon>
        <taxon>Rotavirus</taxon>
        <taxon>Rotavirus A</taxon>
    </lineage>
</organism>
<evidence type="ECO:0000255" key="1">
    <source>
        <dbReference type="HAMAP-Rule" id="MF_04088"/>
    </source>
</evidence>
<comment type="function">
    <text evidence="1">Plays a role in the inhibition of host innate immunity by inducing the degradation of key host factors required to activate interferon production such as IRF3, IRF5 or IRF7. Associates with components of cullin RING ligases (CRLs) including CUL1 or CUL3, which are essential multisubunit ubiquitination complexes, to modulate their activities. Recognizes the host NF-kappa-B regulator BTRC through the presence of a DSGXS motif in the C-terminal substrate recognition domain.</text>
</comment>
<comment type="subunit">
    <text evidence="1">Interacts (via C-terminus) with host IRF3; this interaction leads to IRF3 degradation. Interacts with host IRF7; this interaction leads to IRF7 degradation. Interacts with host CUL1 and CUL3. Interacts with host BTRC.</text>
</comment>
<comment type="subcellular location">
    <subcellularLocation>
        <location evidence="1">Host cytoplasm</location>
        <location evidence="1">Host cytoskeleton</location>
    </subcellularLocation>
</comment>
<comment type="domain">
    <text evidence="1">The integrity of the zinc-binding domain in NSP1 is important for degradation of host IRF3.</text>
</comment>
<comment type="domain">
    <text evidence="1">The pLxIS motif targets host IRF3 for degradation; however phosphorylation of NSP1 pLxIS motif is not required for its activity.</text>
</comment>
<comment type="PTM">
    <text evidence="1">The C-terminal region is phosphorylated by host CKII/CSNK2A1. Phosphorylation of the DSGXS motif is essential for host NF-kappa-B inhibition.</text>
</comment>
<comment type="similarity">
    <text evidence="1">Belongs to the rotavirus NSP1 family.</text>
</comment>
<sequence>MATFKDACYHYKRLNKLNHAVLKLGVNDAWRPSPPTKYKGWCLDCCQHTDLTYCRGCSIYHVCQWCNQYGRCFLDDEPHLLRMRTFKNDITKEDLANLIDMYNVLFPVNQKIVNKFINNTKQHKCRNELVPQWYNHLLMPITLQSLSIELSGDIYYIFGYYDDMKNVNQTPFSFVNLIDIYDRLLLDDVNFNRMSFLPLVLQQEYAIRYFSKSRFISEEKRQINHSHFSINILENLHNPNFKIQITRNCSTMFGKWNEACTLVKDIGTYFEILKTSHVEFYDVSPRCRMFTQHKLKAVSKVIKPNYATSNHRALATEVYNCRWCSVNTSFIVWNDFRLRNICDNVLNFIRALVKSNTRIGHCSSQEQIHSYIRDVFDVCDENKWNTSVSGIFNCLESVELDGVHYVLLNHEVNWDVANVLIQNIGKIPQILTLNDVITALHSMIYDWFDIRYMRNTPTTTFTVDKLRQLCARRKIADYDSGLSDVE</sequence>
<organismHost>
    <name type="scientific">Sus scrofa</name>
    <name type="common">Pig</name>
    <dbReference type="NCBI Taxonomy" id="9823"/>
</organismHost>
<dbReference type="EMBL" id="D38154">
    <property type="protein sequence ID" value="BAA20545.1"/>
    <property type="molecule type" value="Genomic_RNA"/>
</dbReference>
<dbReference type="GO" id="GO:0030430">
    <property type="term" value="C:host cell cytoplasm"/>
    <property type="evidence" value="ECO:0007669"/>
    <property type="project" value="UniProtKB-UniRule"/>
</dbReference>
<dbReference type="GO" id="GO:0044163">
    <property type="term" value="C:host cytoskeleton"/>
    <property type="evidence" value="ECO:0007669"/>
    <property type="project" value="UniProtKB-SubCell"/>
</dbReference>
<dbReference type="GO" id="GO:0046872">
    <property type="term" value="F:metal ion binding"/>
    <property type="evidence" value="ECO:0007669"/>
    <property type="project" value="UniProtKB-UniRule"/>
</dbReference>
<dbReference type="GO" id="GO:0003723">
    <property type="term" value="F:RNA binding"/>
    <property type="evidence" value="ECO:0007669"/>
    <property type="project" value="UniProtKB-UniRule"/>
</dbReference>
<dbReference type="GO" id="GO:0039548">
    <property type="term" value="P:symbiont-mediated suppression of host cytoplasmic pattern recognition receptor signaling pathway via inhibition of IRF3 activity"/>
    <property type="evidence" value="ECO:0007669"/>
    <property type="project" value="UniProtKB-UniRule"/>
</dbReference>
<dbReference type="GO" id="GO:0039557">
    <property type="term" value="P:symbiont-mediated suppression of host cytoplasmic pattern recognition receptor signaling pathway via inhibition of IRF7 activity"/>
    <property type="evidence" value="ECO:0007669"/>
    <property type="project" value="UniProtKB-UniRule"/>
</dbReference>
<dbReference type="GO" id="GO:0085034">
    <property type="term" value="P:symbiont-mediated suppression of host NF-kappaB cascade"/>
    <property type="evidence" value="ECO:0007669"/>
    <property type="project" value="UniProtKB-UniRule"/>
</dbReference>
<dbReference type="HAMAP" id="MF_04088">
    <property type="entry name" value="ROTA_NSP1"/>
    <property type="match status" value="1"/>
</dbReference>
<dbReference type="InterPro" id="IPR002148">
    <property type="entry name" value="Rotavirus_NSP1"/>
</dbReference>
<dbReference type="Pfam" id="PF00981">
    <property type="entry name" value="Rota_NS53"/>
    <property type="match status" value="1"/>
</dbReference>
<feature type="chain" id="PRO_0000369091" description="Non-structural protein 1">
    <location>
        <begin position="1"/>
        <end position="486"/>
    </location>
</feature>
<feature type="region of interest" description="RNA-binding" evidence="1">
    <location>
        <begin position="1"/>
        <end position="81"/>
    </location>
</feature>
<feature type="region of interest" description="Zinc-binding domain" evidence="1">
    <location>
        <begin position="42"/>
        <end position="79"/>
    </location>
</feature>
<feature type="region of interest" description="Important for cytoskeleton localization" evidence="1">
    <location>
        <begin position="82"/>
        <end position="176"/>
    </location>
</feature>
<feature type="region of interest" description="Interaction with host IRF3" evidence="1">
    <location>
        <begin position="317"/>
        <end position="486"/>
    </location>
</feature>
<feature type="short sequence motif" description="IKBKB-like degron (ILD) motif" evidence="1">
    <location>
        <begin position="479"/>
        <end position="483"/>
    </location>
</feature>
<feature type="short sequence motif" description="pLxIS motif" evidence="1">
    <location>
        <begin position="480"/>
        <end position="483"/>
    </location>
</feature>
<reference key="1">
    <citation type="journal article" date="1996" name="Arch. Virol.">
        <title>Species-specific and interspecies relatedness of NSP1 sequences in human, porcine, bovine, feline, and equine rotavirus strains.</title>
        <authorList>
            <person name="Kojima K."/>
            <person name="Taniguchi K."/>
            <person name="Kobayashi N."/>
        </authorList>
    </citation>
    <scope>NUCLEOTIDE SEQUENCE [GENOMIC RNA]</scope>
</reference>
<name>NSP1_ROTPY</name>